<accession>B0KG76</accession>
<sequence>MKRTAFFISDGTGITAETLGQSLLAQFESIPFNKFTRPYIDSPDKARTMVQQINAAAERDGVRPIIFDTIVNQDIREILATSNGFMIDIFSSFLSPLEQELTAHSSYSVGKSHSIGGNSNYMERIEAVNFALDNDDGARTHYYDKADLILVGVSRCGKTPTCLYMAMQFGIRAANYPLTEDDMERLQLPAVLKKHHNKLFGLTIDPDRLTAIRHERKPNSRYSSFAQCEFEVREVESLFRRENIPNINSTHFSVEEISAKILVEKGVERRFK</sequence>
<organism>
    <name type="scientific">Pseudomonas putida (strain GB-1)</name>
    <dbReference type="NCBI Taxonomy" id="76869"/>
    <lineage>
        <taxon>Bacteria</taxon>
        <taxon>Pseudomonadati</taxon>
        <taxon>Pseudomonadota</taxon>
        <taxon>Gammaproteobacteria</taxon>
        <taxon>Pseudomonadales</taxon>
        <taxon>Pseudomonadaceae</taxon>
        <taxon>Pseudomonas</taxon>
    </lineage>
</organism>
<name>PSRP_PSEPG</name>
<proteinExistence type="inferred from homology"/>
<gene>
    <name type="ordered locus">PputGB1_1592</name>
</gene>
<feature type="chain" id="PRO_1000084469" description="Putative phosphoenolpyruvate synthase regulatory protein">
    <location>
        <begin position="1"/>
        <end position="272"/>
    </location>
</feature>
<feature type="binding site" evidence="1">
    <location>
        <begin position="152"/>
        <end position="159"/>
    </location>
    <ligand>
        <name>ADP</name>
        <dbReference type="ChEBI" id="CHEBI:456216"/>
    </ligand>
</feature>
<comment type="function">
    <text evidence="1">Bifunctional serine/threonine kinase and phosphorylase involved in the regulation of the phosphoenolpyruvate synthase (PEPS) by catalyzing its phosphorylation/dephosphorylation.</text>
</comment>
<comment type="catalytic activity">
    <reaction evidence="1">
        <text>[pyruvate, water dikinase] + ADP = [pyruvate, water dikinase]-phosphate + AMP + H(+)</text>
        <dbReference type="Rhea" id="RHEA:46020"/>
        <dbReference type="Rhea" id="RHEA-COMP:11425"/>
        <dbReference type="Rhea" id="RHEA-COMP:11426"/>
        <dbReference type="ChEBI" id="CHEBI:15378"/>
        <dbReference type="ChEBI" id="CHEBI:43176"/>
        <dbReference type="ChEBI" id="CHEBI:68546"/>
        <dbReference type="ChEBI" id="CHEBI:456215"/>
        <dbReference type="ChEBI" id="CHEBI:456216"/>
        <dbReference type="EC" id="2.7.11.33"/>
    </reaction>
</comment>
<comment type="catalytic activity">
    <reaction evidence="1">
        <text>[pyruvate, water dikinase]-phosphate + phosphate + H(+) = [pyruvate, water dikinase] + diphosphate</text>
        <dbReference type="Rhea" id="RHEA:48580"/>
        <dbReference type="Rhea" id="RHEA-COMP:11425"/>
        <dbReference type="Rhea" id="RHEA-COMP:11426"/>
        <dbReference type="ChEBI" id="CHEBI:15378"/>
        <dbReference type="ChEBI" id="CHEBI:33019"/>
        <dbReference type="ChEBI" id="CHEBI:43176"/>
        <dbReference type="ChEBI" id="CHEBI:43474"/>
        <dbReference type="ChEBI" id="CHEBI:68546"/>
        <dbReference type="EC" id="2.7.4.28"/>
    </reaction>
</comment>
<comment type="similarity">
    <text evidence="1">Belongs to the pyruvate, phosphate/water dikinase regulatory protein family. PSRP subfamily.</text>
</comment>
<evidence type="ECO:0000255" key="1">
    <source>
        <dbReference type="HAMAP-Rule" id="MF_01062"/>
    </source>
</evidence>
<protein>
    <recommendedName>
        <fullName evidence="1">Putative phosphoenolpyruvate synthase regulatory protein</fullName>
        <shortName evidence="1">PEP synthase regulatory protein</shortName>
        <shortName evidence="1">PSRP</shortName>
        <ecNumber evidence="1">2.7.11.33</ecNumber>
        <ecNumber evidence="1">2.7.4.28</ecNumber>
    </recommendedName>
    <alternativeName>
        <fullName evidence="1">Pyruvate, water dikinase regulatory protein</fullName>
    </alternativeName>
</protein>
<dbReference type="EC" id="2.7.11.33" evidence="1"/>
<dbReference type="EC" id="2.7.4.28" evidence="1"/>
<dbReference type="EMBL" id="CP000926">
    <property type="protein sequence ID" value="ABY97497.1"/>
    <property type="molecule type" value="Genomic_DNA"/>
</dbReference>
<dbReference type="RefSeq" id="WP_012271263.1">
    <property type="nucleotide sequence ID" value="NC_010322.1"/>
</dbReference>
<dbReference type="SMR" id="B0KG76"/>
<dbReference type="KEGG" id="ppg:PputGB1_1592"/>
<dbReference type="eggNOG" id="COG1806">
    <property type="taxonomic scope" value="Bacteria"/>
</dbReference>
<dbReference type="HOGENOM" id="CLU_046206_1_0_6"/>
<dbReference type="Proteomes" id="UP000002157">
    <property type="component" value="Chromosome"/>
</dbReference>
<dbReference type="GO" id="GO:0043531">
    <property type="term" value="F:ADP binding"/>
    <property type="evidence" value="ECO:0007669"/>
    <property type="project" value="UniProtKB-UniRule"/>
</dbReference>
<dbReference type="GO" id="GO:0005524">
    <property type="term" value="F:ATP binding"/>
    <property type="evidence" value="ECO:0007669"/>
    <property type="project" value="InterPro"/>
</dbReference>
<dbReference type="GO" id="GO:0016776">
    <property type="term" value="F:phosphotransferase activity, phosphate group as acceptor"/>
    <property type="evidence" value="ECO:0007669"/>
    <property type="project" value="UniProtKB-UniRule"/>
</dbReference>
<dbReference type="GO" id="GO:0004674">
    <property type="term" value="F:protein serine/threonine kinase activity"/>
    <property type="evidence" value="ECO:0007669"/>
    <property type="project" value="UniProtKB-UniRule"/>
</dbReference>
<dbReference type="HAMAP" id="MF_01062">
    <property type="entry name" value="PSRP"/>
    <property type="match status" value="1"/>
</dbReference>
<dbReference type="InterPro" id="IPR005177">
    <property type="entry name" value="Kinase-pyrophosphorylase"/>
</dbReference>
<dbReference type="InterPro" id="IPR026530">
    <property type="entry name" value="PSRP"/>
</dbReference>
<dbReference type="NCBIfam" id="NF003742">
    <property type="entry name" value="PRK05339.1"/>
    <property type="match status" value="1"/>
</dbReference>
<dbReference type="PANTHER" id="PTHR31756">
    <property type="entry name" value="PYRUVATE, PHOSPHATE DIKINASE REGULATORY PROTEIN 1, CHLOROPLASTIC"/>
    <property type="match status" value="1"/>
</dbReference>
<dbReference type="PANTHER" id="PTHR31756:SF3">
    <property type="entry name" value="PYRUVATE, PHOSPHATE DIKINASE REGULATORY PROTEIN 1, CHLOROPLASTIC"/>
    <property type="match status" value="1"/>
</dbReference>
<dbReference type="Pfam" id="PF03618">
    <property type="entry name" value="Kinase-PPPase"/>
    <property type="match status" value="1"/>
</dbReference>
<reference key="1">
    <citation type="submission" date="2008-01" db="EMBL/GenBank/DDBJ databases">
        <title>Complete sequence of Pseudomonas putida GB-1.</title>
        <authorList>
            <consortium name="US DOE Joint Genome Institute"/>
            <person name="Copeland A."/>
            <person name="Lucas S."/>
            <person name="Lapidus A."/>
            <person name="Barry K."/>
            <person name="Glavina del Rio T."/>
            <person name="Dalin E."/>
            <person name="Tice H."/>
            <person name="Pitluck S."/>
            <person name="Bruce D."/>
            <person name="Goodwin L."/>
            <person name="Chertkov O."/>
            <person name="Brettin T."/>
            <person name="Detter J.C."/>
            <person name="Han C."/>
            <person name="Kuske C.R."/>
            <person name="Schmutz J."/>
            <person name="Larimer F."/>
            <person name="Land M."/>
            <person name="Hauser L."/>
            <person name="Kyrpides N."/>
            <person name="Kim E."/>
            <person name="McCarthy J.K."/>
            <person name="Richardson P."/>
        </authorList>
    </citation>
    <scope>NUCLEOTIDE SEQUENCE [LARGE SCALE GENOMIC DNA]</scope>
    <source>
        <strain>GB-1</strain>
    </source>
</reference>
<keyword id="KW-0418">Kinase</keyword>
<keyword id="KW-0547">Nucleotide-binding</keyword>
<keyword id="KW-0723">Serine/threonine-protein kinase</keyword>
<keyword id="KW-0808">Transferase</keyword>